<gene>
    <name evidence="1" type="primary">leuS</name>
    <name type="ordered locus">CE2848</name>
</gene>
<evidence type="ECO:0000255" key="1">
    <source>
        <dbReference type="HAMAP-Rule" id="MF_00049"/>
    </source>
</evidence>
<reference key="1">
    <citation type="journal article" date="2003" name="Genome Res.">
        <title>Comparative complete genome sequence analysis of the amino acid replacements responsible for the thermostability of Corynebacterium efficiens.</title>
        <authorList>
            <person name="Nishio Y."/>
            <person name="Nakamura Y."/>
            <person name="Kawarabayasi Y."/>
            <person name="Usuda Y."/>
            <person name="Kimura E."/>
            <person name="Sugimoto S."/>
            <person name="Matsui K."/>
            <person name="Yamagishi A."/>
            <person name="Kikuchi H."/>
            <person name="Ikeo K."/>
            <person name="Gojobori T."/>
        </authorList>
    </citation>
    <scope>NUCLEOTIDE SEQUENCE [LARGE SCALE GENOMIC DNA]</scope>
    <source>
        <strain>DSM 44549 / YS-314 / AJ 12310 / JCM 11189 / NBRC 100395</strain>
    </source>
</reference>
<dbReference type="EC" id="6.1.1.4" evidence="1"/>
<dbReference type="EMBL" id="BA000035">
    <property type="protein sequence ID" value="BAC19658.1"/>
    <property type="molecule type" value="Genomic_DNA"/>
</dbReference>
<dbReference type="RefSeq" id="WP_006768798.1">
    <property type="nucleotide sequence ID" value="NC_004369.1"/>
</dbReference>
<dbReference type="SMR" id="Q8FLM0"/>
<dbReference type="STRING" id="196164.gene:10743298"/>
<dbReference type="KEGG" id="cef:CE2848"/>
<dbReference type="eggNOG" id="COG0495">
    <property type="taxonomic scope" value="Bacteria"/>
</dbReference>
<dbReference type="HOGENOM" id="CLU_004427_0_0_11"/>
<dbReference type="OrthoDB" id="9810365at2"/>
<dbReference type="Proteomes" id="UP000001409">
    <property type="component" value="Chromosome"/>
</dbReference>
<dbReference type="GO" id="GO:0005829">
    <property type="term" value="C:cytosol"/>
    <property type="evidence" value="ECO:0007669"/>
    <property type="project" value="TreeGrafter"/>
</dbReference>
<dbReference type="GO" id="GO:0002161">
    <property type="term" value="F:aminoacyl-tRNA deacylase activity"/>
    <property type="evidence" value="ECO:0007669"/>
    <property type="project" value="InterPro"/>
</dbReference>
<dbReference type="GO" id="GO:0005524">
    <property type="term" value="F:ATP binding"/>
    <property type="evidence" value="ECO:0007669"/>
    <property type="project" value="UniProtKB-UniRule"/>
</dbReference>
<dbReference type="GO" id="GO:0004823">
    <property type="term" value="F:leucine-tRNA ligase activity"/>
    <property type="evidence" value="ECO:0007669"/>
    <property type="project" value="UniProtKB-UniRule"/>
</dbReference>
<dbReference type="GO" id="GO:0006429">
    <property type="term" value="P:leucyl-tRNA aminoacylation"/>
    <property type="evidence" value="ECO:0007669"/>
    <property type="project" value="UniProtKB-UniRule"/>
</dbReference>
<dbReference type="CDD" id="cd07958">
    <property type="entry name" value="Anticodon_Ia_Leu_BEm"/>
    <property type="match status" value="1"/>
</dbReference>
<dbReference type="FunFam" id="3.40.50.620:FF:000056">
    <property type="entry name" value="Leucine--tRNA ligase"/>
    <property type="match status" value="1"/>
</dbReference>
<dbReference type="FunFam" id="3.40.50.620:FF:000060">
    <property type="entry name" value="Leucine--tRNA ligase"/>
    <property type="match status" value="1"/>
</dbReference>
<dbReference type="FunFam" id="3.40.50.620:FF:000087">
    <property type="entry name" value="Leucine--tRNA ligase"/>
    <property type="match status" value="1"/>
</dbReference>
<dbReference type="FunFam" id="3.90.740.10:FF:000017">
    <property type="entry name" value="Leucine--tRNA ligase"/>
    <property type="match status" value="1"/>
</dbReference>
<dbReference type="FunFam" id="1.10.730.10:FF:000011">
    <property type="entry name" value="Leucine--tRNA ligase chloroplastic/mitochondrial"/>
    <property type="match status" value="1"/>
</dbReference>
<dbReference type="Gene3D" id="3.40.50.620">
    <property type="entry name" value="HUPs"/>
    <property type="match status" value="2"/>
</dbReference>
<dbReference type="Gene3D" id="1.10.730.10">
    <property type="entry name" value="Isoleucyl-tRNA Synthetase, Domain 1"/>
    <property type="match status" value="1"/>
</dbReference>
<dbReference type="Gene3D" id="3.90.740.10">
    <property type="entry name" value="Valyl/Leucyl/Isoleucyl-tRNA synthetase, editing domain"/>
    <property type="match status" value="1"/>
</dbReference>
<dbReference type="HAMAP" id="MF_00049_B">
    <property type="entry name" value="Leu_tRNA_synth_B"/>
    <property type="match status" value="1"/>
</dbReference>
<dbReference type="InterPro" id="IPR001412">
    <property type="entry name" value="aa-tRNA-synth_I_CS"/>
</dbReference>
<dbReference type="InterPro" id="IPR002302">
    <property type="entry name" value="Leu-tRNA-ligase"/>
</dbReference>
<dbReference type="InterPro" id="IPR025709">
    <property type="entry name" value="Leu_tRNA-synth_edit"/>
</dbReference>
<dbReference type="InterPro" id="IPR013155">
    <property type="entry name" value="M/V/L/I-tRNA-synth_anticd-bd"/>
</dbReference>
<dbReference type="InterPro" id="IPR015413">
    <property type="entry name" value="Methionyl/Leucyl_tRNA_Synth"/>
</dbReference>
<dbReference type="InterPro" id="IPR014729">
    <property type="entry name" value="Rossmann-like_a/b/a_fold"/>
</dbReference>
<dbReference type="InterPro" id="IPR009080">
    <property type="entry name" value="tRNAsynth_Ia_anticodon-bd"/>
</dbReference>
<dbReference type="InterPro" id="IPR009008">
    <property type="entry name" value="Val/Leu/Ile-tRNA-synth_edit"/>
</dbReference>
<dbReference type="NCBIfam" id="TIGR00396">
    <property type="entry name" value="leuS_bact"/>
    <property type="match status" value="1"/>
</dbReference>
<dbReference type="PANTHER" id="PTHR43740:SF2">
    <property type="entry name" value="LEUCINE--TRNA LIGASE, MITOCHONDRIAL"/>
    <property type="match status" value="1"/>
</dbReference>
<dbReference type="PANTHER" id="PTHR43740">
    <property type="entry name" value="LEUCYL-TRNA SYNTHETASE"/>
    <property type="match status" value="1"/>
</dbReference>
<dbReference type="Pfam" id="PF08264">
    <property type="entry name" value="Anticodon_1"/>
    <property type="match status" value="1"/>
</dbReference>
<dbReference type="Pfam" id="PF13603">
    <property type="entry name" value="tRNA-synt_1_2"/>
    <property type="match status" value="1"/>
</dbReference>
<dbReference type="Pfam" id="PF09334">
    <property type="entry name" value="tRNA-synt_1g"/>
    <property type="match status" value="1"/>
</dbReference>
<dbReference type="PRINTS" id="PR00985">
    <property type="entry name" value="TRNASYNTHLEU"/>
</dbReference>
<dbReference type="SUPFAM" id="SSF47323">
    <property type="entry name" value="Anticodon-binding domain of a subclass of class I aminoacyl-tRNA synthetases"/>
    <property type="match status" value="1"/>
</dbReference>
<dbReference type="SUPFAM" id="SSF52374">
    <property type="entry name" value="Nucleotidylyl transferase"/>
    <property type="match status" value="1"/>
</dbReference>
<dbReference type="SUPFAM" id="SSF50677">
    <property type="entry name" value="ValRS/IleRS/LeuRS editing domain"/>
    <property type="match status" value="1"/>
</dbReference>
<dbReference type="PROSITE" id="PS00178">
    <property type="entry name" value="AA_TRNA_LIGASE_I"/>
    <property type="match status" value="1"/>
</dbReference>
<organism>
    <name type="scientific">Corynebacterium efficiens (strain DSM 44549 / YS-314 / AJ 12310 / JCM 11189 / NBRC 100395)</name>
    <dbReference type="NCBI Taxonomy" id="196164"/>
    <lineage>
        <taxon>Bacteria</taxon>
        <taxon>Bacillati</taxon>
        <taxon>Actinomycetota</taxon>
        <taxon>Actinomycetes</taxon>
        <taxon>Mycobacteriales</taxon>
        <taxon>Corynebacteriaceae</taxon>
        <taxon>Corynebacterium</taxon>
    </lineage>
</organism>
<keyword id="KW-0030">Aminoacyl-tRNA synthetase</keyword>
<keyword id="KW-0067">ATP-binding</keyword>
<keyword id="KW-0963">Cytoplasm</keyword>
<keyword id="KW-0436">Ligase</keyword>
<keyword id="KW-0547">Nucleotide-binding</keyword>
<keyword id="KW-0648">Protein biosynthesis</keyword>
<keyword id="KW-1185">Reference proteome</keyword>
<protein>
    <recommendedName>
        <fullName evidence="1">Leucine--tRNA ligase</fullName>
        <ecNumber evidence="1">6.1.1.4</ecNumber>
    </recommendedName>
    <alternativeName>
        <fullName evidence="1">Leucyl-tRNA synthetase</fullName>
        <shortName evidence="1">LeuRS</shortName>
    </alternativeName>
</protein>
<accession>Q8FLM0</accession>
<comment type="catalytic activity">
    <reaction evidence="1">
        <text>tRNA(Leu) + L-leucine + ATP = L-leucyl-tRNA(Leu) + AMP + diphosphate</text>
        <dbReference type="Rhea" id="RHEA:11688"/>
        <dbReference type="Rhea" id="RHEA-COMP:9613"/>
        <dbReference type="Rhea" id="RHEA-COMP:9622"/>
        <dbReference type="ChEBI" id="CHEBI:30616"/>
        <dbReference type="ChEBI" id="CHEBI:33019"/>
        <dbReference type="ChEBI" id="CHEBI:57427"/>
        <dbReference type="ChEBI" id="CHEBI:78442"/>
        <dbReference type="ChEBI" id="CHEBI:78494"/>
        <dbReference type="ChEBI" id="CHEBI:456215"/>
        <dbReference type="EC" id="6.1.1.4"/>
    </reaction>
</comment>
<comment type="subcellular location">
    <subcellularLocation>
        <location evidence="1">Cytoplasm</location>
    </subcellularLocation>
</comment>
<comment type="similarity">
    <text evidence="1">Belongs to the class-I aminoacyl-tRNA synthetase family.</text>
</comment>
<sequence length="957" mass="107399">MTNPSEGTSSSAQSLAYRYTPELANAIEREWQNYWTDKGTFNAPNPVGDLAPEDGRELPGDKLFVQDMFPYPSGAGLHVGHPLGYIATDVFARYNRMLGKNVLHTLGYDAFGLPAEQYAIQTGTHPRTTTMANIENMKRQLGALGLGHDPRRAVASTDPEFYKWTQWIFLQIFNSWFDEEQQKARPISELIPLLESGEIPTRDGADYNGLDRVAKQKAIDEFRLVYRSNSTVNWCPGLGTVLANEEVTADGRSERGNFPVFRKNLSQWMMRITAYSDRLIDDLELLDWPEKVKSMQRNWIGRSRGAEVDFTAEGETITVFTTRPDTLFGATYMVLAPEHELVDVLVSRGTGSYDGVDPRWTNGQATPAEAVAAYRASIAAKSDLERQENKDKTGVFLGVHATNPVNGEQIPVFIADYVLTGYGTGAIMAVPAHDDRDYEFATVFGLPIVEVVAGGNIAEAAYTASGESINSANDQGLDINGLAMVDAVARTIEWLEEKQLGRGTIQYKLRDWLFARQRYWGEPFPVVYDEDGVAYALPESMLPVELPEVEDYKPVSFDPEDADSEPSPPLAKAREWVEVELDLGDGVKKYTRDTNVMPQWAGSSWYQLRYIDPTNDDQFCNLENEAYWTGPRPDVHGPNDPGGVDLYVGGVEHAVLHLLYSRFWHKVLYDLGYVTSKEPYRRLYNQGYIQAFAYTDSRGVYVPAEEVEEKDGKFFYQGEEVTQEYGKMGKSLKNAVAPDDICNNYGADTLRVYEMSMGPLDTSRPWATKDVVGAQRFLQRLWRLIVDENTGEVLTRDEALTDEDNKHLHRTIAGVRDDYANLRVNTVVAKLIEYVNYLTKTYPDTIPTGAVLPLVVMVSPVAPHIAEELWKKLGHTDTVTYEPFPTFEEKWLTDDEVELPVQINGKVRSRITVAADASQEQIIEVALADEKIALQIEGKNLIKQIVIPGRMVNLVVK</sequence>
<feature type="chain" id="PRO_0000152006" description="Leucine--tRNA ligase">
    <location>
        <begin position="1"/>
        <end position="957"/>
    </location>
</feature>
<feature type="short sequence motif" description="'HIGH' region">
    <location>
        <begin position="70"/>
        <end position="81"/>
    </location>
</feature>
<feature type="short sequence motif" description="'KMSKS' region">
    <location>
        <begin position="727"/>
        <end position="731"/>
    </location>
</feature>
<feature type="binding site" evidence="1">
    <location>
        <position position="730"/>
    </location>
    <ligand>
        <name>ATP</name>
        <dbReference type="ChEBI" id="CHEBI:30616"/>
    </ligand>
</feature>
<name>SYL_COREF</name>
<proteinExistence type="inferred from homology"/>